<organism>
    <name type="scientific">Porphyromonas gingivalis (strain ATCC 33277 / DSM 20709 / CIP 103683 / JCM 12257 / NCTC 11834 / 2561)</name>
    <dbReference type="NCBI Taxonomy" id="431947"/>
    <lineage>
        <taxon>Bacteria</taxon>
        <taxon>Pseudomonadati</taxon>
        <taxon>Bacteroidota</taxon>
        <taxon>Bacteroidia</taxon>
        <taxon>Bacteroidales</taxon>
        <taxon>Porphyromonadaceae</taxon>
        <taxon>Porphyromonas</taxon>
    </lineage>
</organism>
<protein>
    <recommendedName>
        <fullName evidence="1">Methionine--tRNA ligase</fullName>
        <ecNumber evidence="1">6.1.1.10</ecNumber>
    </recommendedName>
    <alternativeName>
        <fullName evidence="1">Methionyl-tRNA synthetase</fullName>
        <shortName evidence="1">MetRS</shortName>
    </alternativeName>
</protein>
<reference key="1">
    <citation type="journal article" date="2008" name="DNA Res.">
        <title>Determination of the genome sequence of Porphyromonas gingivalis strain ATCC 33277 and genomic comparison with strain W83 revealed extensive genome rearrangements in P. gingivalis.</title>
        <authorList>
            <person name="Naito M."/>
            <person name="Hirakawa H."/>
            <person name="Yamashita A."/>
            <person name="Ohara N."/>
            <person name="Shoji M."/>
            <person name="Yukitake H."/>
            <person name="Nakayama K."/>
            <person name="Toh H."/>
            <person name="Yoshimura F."/>
            <person name="Kuhara S."/>
            <person name="Hattori M."/>
            <person name="Hayashi T."/>
            <person name="Nakayama K."/>
        </authorList>
    </citation>
    <scope>NUCLEOTIDE SEQUENCE [LARGE SCALE GENOMIC DNA]</scope>
    <source>
        <strain>ATCC 33277 / DSM 20709 / CIP 103683 / JCM 12257 / NCTC 11834 / 2561</strain>
    </source>
</reference>
<gene>
    <name evidence="1" type="primary">metG</name>
    <name type="ordered locus">PGN_0281</name>
</gene>
<name>SYM_PORG3</name>
<sequence>MDRQFKRTLITTALPYANGPVHIGHLAGVYVPADIYARYLRLRGRDCLLIGGSDEHGVPIALKAKAEGCTPQEVVDRYHELIKRSFEGLGISFDIYSRTTSDIHRRTASEFFKTLYEKGEFVEQTSEQYYDEEAKQFLADRYIIGTCPHCSNDRAYGDQCEACGTSLNATDLIDPRSTISGSAPVLRETKHWYLPLDKHEPFLKEWILDGHKEWKSNVYGQCKSWLDMGLQPRAVSRDLDWGIPVPVEGAEGKVLYVWFDAPIGYISNTKELCPDSWETWWKSEDTRLVHFIGKDNIVFHCIVFPAMLRAEGSFILPDNVPANEFLNLEGDKISTSRNWAVWLHEYLEEFPGKQDVLRYVLTANAPETKDNDFTWRDFQARNNNELVAIFGNFVNRALVLTHKYFDGAVPPKGELTDYDSRTIEEFAAVKQALEHQLDTFHFREALKEAMNLARIGNKYLADTEPWKLAKTDMNRVATILNLSLQITANLAIAFEPFLPFSSAKLMSMLSTDCPFGWDRLGSTDLLPEGHVLGNPELLFEKLEDSVIDAQIQKLQDTKLANEKAAHQAAPIAEDIAFEDFLKLDIRVGTVLECEKVPKADKLLRFRIDDGLGGRTIVSGIAKHYAPEELVGKQVCFIANLPPRKLKGIESEGMILSAEDADGSLRVIMPAAEVAPGSQVK</sequence>
<keyword id="KW-0030">Aminoacyl-tRNA synthetase</keyword>
<keyword id="KW-0067">ATP-binding</keyword>
<keyword id="KW-0963">Cytoplasm</keyword>
<keyword id="KW-0436">Ligase</keyword>
<keyword id="KW-0479">Metal-binding</keyword>
<keyword id="KW-0547">Nucleotide-binding</keyword>
<keyword id="KW-0648">Protein biosynthesis</keyword>
<keyword id="KW-0694">RNA-binding</keyword>
<keyword id="KW-0820">tRNA-binding</keyword>
<keyword id="KW-0862">Zinc</keyword>
<proteinExistence type="inferred from homology"/>
<comment type="function">
    <text evidence="1">Is required not only for elongation of protein synthesis but also for the initiation of all mRNA translation through initiator tRNA(fMet) aminoacylation.</text>
</comment>
<comment type="catalytic activity">
    <reaction evidence="1">
        <text>tRNA(Met) + L-methionine + ATP = L-methionyl-tRNA(Met) + AMP + diphosphate</text>
        <dbReference type="Rhea" id="RHEA:13481"/>
        <dbReference type="Rhea" id="RHEA-COMP:9667"/>
        <dbReference type="Rhea" id="RHEA-COMP:9698"/>
        <dbReference type="ChEBI" id="CHEBI:30616"/>
        <dbReference type="ChEBI" id="CHEBI:33019"/>
        <dbReference type="ChEBI" id="CHEBI:57844"/>
        <dbReference type="ChEBI" id="CHEBI:78442"/>
        <dbReference type="ChEBI" id="CHEBI:78530"/>
        <dbReference type="ChEBI" id="CHEBI:456215"/>
        <dbReference type="EC" id="6.1.1.10"/>
    </reaction>
</comment>
<comment type="cofactor">
    <cofactor evidence="1">
        <name>Zn(2+)</name>
        <dbReference type="ChEBI" id="CHEBI:29105"/>
    </cofactor>
    <text evidence="1">Binds 1 zinc ion per subunit.</text>
</comment>
<comment type="subunit">
    <text evidence="1">Homodimer.</text>
</comment>
<comment type="subcellular location">
    <subcellularLocation>
        <location evidence="1">Cytoplasm</location>
    </subcellularLocation>
</comment>
<comment type="similarity">
    <text evidence="1">Belongs to the class-I aminoacyl-tRNA synthetase family. MetG type 1 subfamily.</text>
</comment>
<accession>B2RHF5</accession>
<evidence type="ECO:0000255" key="1">
    <source>
        <dbReference type="HAMAP-Rule" id="MF_00098"/>
    </source>
</evidence>
<feature type="chain" id="PRO_1000093722" description="Methionine--tRNA ligase">
    <location>
        <begin position="1"/>
        <end position="680"/>
    </location>
</feature>
<feature type="domain" description="tRNA-binding" evidence="1">
    <location>
        <begin position="579"/>
        <end position="680"/>
    </location>
</feature>
<feature type="short sequence motif" description="'HIGH' region">
    <location>
        <begin position="15"/>
        <end position="25"/>
    </location>
</feature>
<feature type="short sequence motif" description="'KMSKS' region">
    <location>
        <begin position="332"/>
        <end position="336"/>
    </location>
</feature>
<feature type="binding site" evidence="1">
    <location>
        <position position="147"/>
    </location>
    <ligand>
        <name>Zn(2+)</name>
        <dbReference type="ChEBI" id="CHEBI:29105"/>
    </ligand>
</feature>
<feature type="binding site" evidence="1">
    <location>
        <position position="150"/>
    </location>
    <ligand>
        <name>Zn(2+)</name>
        <dbReference type="ChEBI" id="CHEBI:29105"/>
    </ligand>
</feature>
<feature type="binding site" evidence="1">
    <location>
        <position position="160"/>
    </location>
    <ligand>
        <name>Zn(2+)</name>
        <dbReference type="ChEBI" id="CHEBI:29105"/>
    </ligand>
</feature>
<feature type="binding site" evidence="1">
    <location>
        <position position="163"/>
    </location>
    <ligand>
        <name>Zn(2+)</name>
        <dbReference type="ChEBI" id="CHEBI:29105"/>
    </ligand>
</feature>
<feature type="binding site" evidence="1">
    <location>
        <position position="335"/>
    </location>
    <ligand>
        <name>ATP</name>
        <dbReference type="ChEBI" id="CHEBI:30616"/>
    </ligand>
</feature>
<dbReference type="EC" id="6.1.1.10" evidence="1"/>
<dbReference type="EMBL" id="AP009380">
    <property type="protein sequence ID" value="BAG32800.1"/>
    <property type="molecule type" value="Genomic_DNA"/>
</dbReference>
<dbReference type="RefSeq" id="WP_012457390.1">
    <property type="nucleotide sequence ID" value="NZ_CP025930.1"/>
</dbReference>
<dbReference type="SMR" id="B2RHF5"/>
<dbReference type="GeneID" id="29255528"/>
<dbReference type="KEGG" id="pgn:PGN_0281"/>
<dbReference type="eggNOG" id="COG0073">
    <property type="taxonomic scope" value="Bacteria"/>
</dbReference>
<dbReference type="eggNOG" id="COG0143">
    <property type="taxonomic scope" value="Bacteria"/>
</dbReference>
<dbReference type="HOGENOM" id="CLU_009710_1_2_10"/>
<dbReference type="OrthoDB" id="9810191at2"/>
<dbReference type="BioCyc" id="PGIN431947:G1G2V-308-MONOMER"/>
<dbReference type="Proteomes" id="UP000008842">
    <property type="component" value="Chromosome"/>
</dbReference>
<dbReference type="GO" id="GO:0005829">
    <property type="term" value="C:cytosol"/>
    <property type="evidence" value="ECO:0007669"/>
    <property type="project" value="TreeGrafter"/>
</dbReference>
<dbReference type="GO" id="GO:0005524">
    <property type="term" value="F:ATP binding"/>
    <property type="evidence" value="ECO:0007669"/>
    <property type="project" value="UniProtKB-UniRule"/>
</dbReference>
<dbReference type="GO" id="GO:0046872">
    <property type="term" value="F:metal ion binding"/>
    <property type="evidence" value="ECO:0007669"/>
    <property type="project" value="UniProtKB-KW"/>
</dbReference>
<dbReference type="GO" id="GO:0004825">
    <property type="term" value="F:methionine-tRNA ligase activity"/>
    <property type="evidence" value="ECO:0007669"/>
    <property type="project" value="UniProtKB-UniRule"/>
</dbReference>
<dbReference type="GO" id="GO:0000049">
    <property type="term" value="F:tRNA binding"/>
    <property type="evidence" value="ECO:0007669"/>
    <property type="project" value="UniProtKB-KW"/>
</dbReference>
<dbReference type="GO" id="GO:0006431">
    <property type="term" value="P:methionyl-tRNA aminoacylation"/>
    <property type="evidence" value="ECO:0007669"/>
    <property type="project" value="UniProtKB-UniRule"/>
</dbReference>
<dbReference type="CDD" id="cd07957">
    <property type="entry name" value="Anticodon_Ia_Met"/>
    <property type="match status" value="1"/>
</dbReference>
<dbReference type="CDD" id="cd00814">
    <property type="entry name" value="MetRS_core"/>
    <property type="match status" value="1"/>
</dbReference>
<dbReference type="CDD" id="cd02800">
    <property type="entry name" value="tRNA_bind_EcMetRS_like"/>
    <property type="match status" value="1"/>
</dbReference>
<dbReference type="FunFam" id="2.20.28.20:FF:000001">
    <property type="entry name" value="Methionine--tRNA ligase"/>
    <property type="match status" value="1"/>
</dbReference>
<dbReference type="FunFam" id="2.40.50.140:FF:000042">
    <property type="entry name" value="Methionine--tRNA ligase"/>
    <property type="match status" value="1"/>
</dbReference>
<dbReference type="Gene3D" id="3.40.50.620">
    <property type="entry name" value="HUPs"/>
    <property type="match status" value="1"/>
</dbReference>
<dbReference type="Gene3D" id="1.10.730.10">
    <property type="entry name" value="Isoleucyl-tRNA Synthetase, Domain 1"/>
    <property type="match status" value="1"/>
</dbReference>
<dbReference type="Gene3D" id="2.20.28.20">
    <property type="entry name" value="Methionyl-tRNA synthetase, Zn-domain"/>
    <property type="match status" value="1"/>
</dbReference>
<dbReference type="Gene3D" id="2.40.50.140">
    <property type="entry name" value="Nucleic acid-binding proteins"/>
    <property type="match status" value="1"/>
</dbReference>
<dbReference type="HAMAP" id="MF_00098">
    <property type="entry name" value="Met_tRNA_synth_type1"/>
    <property type="match status" value="1"/>
</dbReference>
<dbReference type="InterPro" id="IPR001412">
    <property type="entry name" value="aa-tRNA-synth_I_CS"/>
</dbReference>
<dbReference type="InterPro" id="IPR041872">
    <property type="entry name" value="Anticodon_Met"/>
</dbReference>
<dbReference type="InterPro" id="IPR004495">
    <property type="entry name" value="Met-tRNA-synth_bsu_C"/>
</dbReference>
<dbReference type="InterPro" id="IPR023458">
    <property type="entry name" value="Met-tRNA_ligase_1"/>
</dbReference>
<dbReference type="InterPro" id="IPR014758">
    <property type="entry name" value="Met-tRNA_synth"/>
</dbReference>
<dbReference type="InterPro" id="IPR015413">
    <property type="entry name" value="Methionyl/Leucyl_tRNA_Synth"/>
</dbReference>
<dbReference type="InterPro" id="IPR033911">
    <property type="entry name" value="MetRS_core"/>
</dbReference>
<dbReference type="InterPro" id="IPR029038">
    <property type="entry name" value="MetRS_Zn"/>
</dbReference>
<dbReference type="InterPro" id="IPR012340">
    <property type="entry name" value="NA-bd_OB-fold"/>
</dbReference>
<dbReference type="InterPro" id="IPR014729">
    <property type="entry name" value="Rossmann-like_a/b/a_fold"/>
</dbReference>
<dbReference type="InterPro" id="IPR002547">
    <property type="entry name" value="tRNA-bd_dom"/>
</dbReference>
<dbReference type="InterPro" id="IPR009080">
    <property type="entry name" value="tRNAsynth_Ia_anticodon-bd"/>
</dbReference>
<dbReference type="NCBIfam" id="TIGR00398">
    <property type="entry name" value="metG"/>
    <property type="match status" value="1"/>
</dbReference>
<dbReference type="NCBIfam" id="TIGR00399">
    <property type="entry name" value="metG_C_term"/>
    <property type="match status" value="1"/>
</dbReference>
<dbReference type="NCBIfam" id="NF001100">
    <property type="entry name" value="PRK00133.1"/>
    <property type="match status" value="1"/>
</dbReference>
<dbReference type="PANTHER" id="PTHR45765">
    <property type="entry name" value="METHIONINE--TRNA LIGASE"/>
    <property type="match status" value="1"/>
</dbReference>
<dbReference type="PANTHER" id="PTHR45765:SF1">
    <property type="entry name" value="METHIONINE--TRNA LIGASE, CYTOPLASMIC"/>
    <property type="match status" value="1"/>
</dbReference>
<dbReference type="Pfam" id="PF19303">
    <property type="entry name" value="Anticodon_3"/>
    <property type="match status" value="1"/>
</dbReference>
<dbReference type="Pfam" id="PF09334">
    <property type="entry name" value="tRNA-synt_1g"/>
    <property type="match status" value="1"/>
</dbReference>
<dbReference type="Pfam" id="PF01588">
    <property type="entry name" value="tRNA_bind"/>
    <property type="match status" value="1"/>
</dbReference>
<dbReference type="PRINTS" id="PR01041">
    <property type="entry name" value="TRNASYNTHMET"/>
</dbReference>
<dbReference type="SUPFAM" id="SSF47323">
    <property type="entry name" value="Anticodon-binding domain of a subclass of class I aminoacyl-tRNA synthetases"/>
    <property type="match status" value="1"/>
</dbReference>
<dbReference type="SUPFAM" id="SSF57770">
    <property type="entry name" value="Methionyl-tRNA synthetase (MetRS), Zn-domain"/>
    <property type="match status" value="1"/>
</dbReference>
<dbReference type="SUPFAM" id="SSF50249">
    <property type="entry name" value="Nucleic acid-binding proteins"/>
    <property type="match status" value="1"/>
</dbReference>
<dbReference type="SUPFAM" id="SSF52374">
    <property type="entry name" value="Nucleotidylyl transferase"/>
    <property type="match status" value="1"/>
</dbReference>
<dbReference type="PROSITE" id="PS00178">
    <property type="entry name" value="AA_TRNA_LIGASE_I"/>
    <property type="match status" value="1"/>
</dbReference>
<dbReference type="PROSITE" id="PS50886">
    <property type="entry name" value="TRBD"/>
    <property type="match status" value="1"/>
</dbReference>